<feature type="chain" id="PRO_0000272167" description="Lipoprotein-releasing system ATP-binding protein LolD">
    <location>
        <begin position="1"/>
        <end position="244"/>
    </location>
</feature>
<feature type="domain" description="ABC transporter" evidence="1">
    <location>
        <begin position="19"/>
        <end position="244"/>
    </location>
</feature>
<feature type="binding site" evidence="1">
    <location>
        <begin position="55"/>
        <end position="62"/>
    </location>
    <ligand>
        <name>ATP</name>
        <dbReference type="ChEBI" id="CHEBI:30616"/>
    </ligand>
</feature>
<gene>
    <name evidence="1" type="primary">lolD</name>
    <name type="ordered locus">XOO2304</name>
</gene>
<comment type="function">
    <text evidence="1">Part of the ABC transporter complex LolCDE involved in the translocation of mature outer membrane-directed lipoproteins, from the inner membrane to the periplasmic chaperone, LolA. Responsible for the formation of the LolA-lipoprotein complex in an ATP-dependent manner.</text>
</comment>
<comment type="subunit">
    <text evidence="1">The complex is composed of two ATP-binding proteins (LolD) and two transmembrane proteins (LolC and LolE).</text>
</comment>
<comment type="subcellular location">
    <subcellularLocation>
        <location evidence="1">Cell inner membrane</location>
        <topology evidence="1">Peripheral membrane protein</topology>
    </subcellularLocation>
</comment>
<comment type="similarity">
    <text evidence="1">Belongs to the ABC transporter superfamily. Lipoprotein translocase (TC 3.A.1.125) family.</text>
</comment>
<organism>
    <name type="scientific">Xanthomonas oryzae pv. oryzae (strain KACC10331 / KXO85)</name>
    <dbReference type="NCBI Taxonomy" id="291331"/>
    <lineage>
        <taxon>Bacteria</taxon>
        <taxon>Pseudomonadati</taxon>
        <taxon>Pseudomonadota</taxon>
        <taxon>Gammaproteobacteria</taxon>
        <taxon>Lysobacterales</taxon>
        <taxon>Lysobacteraceae</taxon>
        <taxon>Xanthomonas</taxon>
    </lineage>
</organism>
<proteinExistence type="inferred from homology"/>
<accession>Q5H0G3</accession>
<evidence type="ECO:0000255" key="1">
    <source>
        <dbReference type="HAMAP-Rule" id="MF_01708"/>
    </source>
</evidence>
<reference key="1">
    <citation type="journal article" date="2005" name="Nucleic Acids Res.">
        <title>The genome sequence of Xanthomonas oryzae pathovar oryzae KACC10331, the bacterial blight pathogen of rice.</title>
        <authorList>
            <person name="Lee B.-M."/>
            <person name="Park Y.-J."/>
            <person name="Park D.-S."/>
            <person name="Kang H.-W."/>
            <person name="Kim J.-G."/>
            <person name="Song E.-S."/>
            <person name="Park I.-C."/>
            <person name="Yoon U.-H."/>
            <person name="Hahn J.-H."/>
            <person name="Koo B.-S."/>
            <person name="Lee G.-B."/>
            <person name="Kim H."/>
            <person name="Park H.-S."/>
            <person name="Yoon K.-O."/>
            <person name="Kim J.-H."/>
            <person name="Jung C.-H."/>
            <person name="Koh N.-H."/>
            <person name="Seo J.-S."/>
            <person name="Go S.-J."/>
        </authorList>
    </citation>
    <scope>NUCLEOTIDE SEQUENCE [LARGE SCALE GENOMIC DNA]</scope>
    <source>
        <strain>KACC10331 / KXO85</strain>
    </source>
</reference>
<protein>
    <recommendedName>
        <fullName evidence="1">Lipoprotein-releasing system ATP-binding protein LolD</fullName>
        <ecNumber evidence="1">7.6.2.-</ecNumber>
    </recommendedName>
</protein>
<dbReference type="EC" id="7.6.2.-" evidence="1"/>
<dbReference type="EMBL" id="AE013598">
    <property type="protein sequence ID" value="AAW75558.1"/>
    <property type="molecule type" value="Genomic_DNA"/>
</dbReference>
<dbReference type="SMR" id="Q5H0G3"/>
<dbReference type="STRING" id="291331.XOO2304"/>
<dbReference type="KEGG" id="xoo:XOO2304"/>
<dbReference type="HOGENOM" id="CLU_000604_1_22_6"/>
<dbReference type="Proteomes" id="UP000006735">
    <property type="component" value="Chromosome"/>
</dbReference>
<dbReference type="GO" id="GO:0005886">
    <property type="term" value="C:plasma membrane"/>
    <property type="evidence" value="ECO:0007669"/>
    <property type="project" value="UniProtKB-SubCell"/>
</dbReference>
<dbReference type="GO" id="GO:0005524">
    <property type="term" value="F:ATP binding"/>
    <property type="evidence" value="ECO:0007669"/>
    <property type="project" value="UniProtKB-KW"/>
</dbReference>
<dbReference type="GO" id="GO:0016887">
    <property type="term" value="F:ATP hydrolysis activity"/>
    <property type="evidence" value="ECO:0007669"/>
    <property type="project" value="InterPro"/>
</dbReference>
<dbReference type="GO" id="GO:0022857">
    <property type="term" value="F:transmembrane transporter activity"/>
    <property type="evidence" value="ECO:0007669"/>
    <property type="project" value="TreeGrafter"/>
</dbReference>
<dbReference type="GO" id="GO:0044874">
    <property type="term" value="P:lipoprotein localization to outer membrane"/>
    <property type="evidence" value="ECO:0007669"/>
    <property type="project" value="TreeGrafter"/>
</dbReference>
<dbReference type="GO" id="GO:0089705">
    <property type="term" value="P:protein localization to outer membrane"/>
    <property type="evidence" value="ECO:0007669"/>
    <property type="project" value="TreeGrafter"/>
</dbReference>
<dbReference type="CDD" id="cd03255">
    <property type="entry name" value="ABC_MJ0796_LolCDE_FtsE"/>
    <property type="match status" value="1"/>
</dbReference>
<dbReference type="FunFam" id="3.40.50.300:FF:000230">
    <property type="entry name" value="Lipoprotein-releasing system ATP-binding protein LolD"/>
    <property type="match status" value="1"/>
</dbReference>
<dbReference type="Gene3D" id="3.40.50.300">
    <property type="entry name" value="P-loop containing nucleotide triphosphate hydrolases"/>
    <property type="match status" value="1"/>
</dbReference>
<dbReference type="InterPro" id="IPR003593">
    <property type="entry name" value="AAA+_ATPase"/>
</dbReference>
<dbReference type="InterPro" id="IPR003439">
    <property type="entry name" value="ABC_transporter-like_ATP-bd"/>
</dbReference>
<dbReference type="InterPro" id="IPR015854">
    <property type="entry name" value="ABC_transpr_LolD-like"/>
</dbReference>
<dbReference type="InterPro" id="IPR011924">
    <property type="entry name" value="LolD_lipo_ATP-bd"/>
</dbReference>
<dbReference type="InterPro" id="IPR017911">
    <property type="entry name" value="MacB-like_ATP-bd"/>
</dbReference>
<dbReference type="InterPro" id="IPR027417">
    <property type="entry name" value="P-loop_NTPase"/>
</dbReference>
<dbReference type="NCBIfam" id="TIGR02211">
    <property type="entry name" value="LolD_lipo_ex"/>
    <property type="match status" value="1"/>
</dbReference>
<dbReference type="PANTHER" id="PTHR24220">
    <property type="entry name" value="IMPORT ATP-BINDING PROTEIN"/>
    <property type="match status" value="1"/>
</dbReference>
<dbReference type="PANTHER" id="PTHR24220:SF689">
    <property type="entry name" value="LIPOPROTEIN-RELEASING SYSTEM ATP-BINDING PROTEIN LOLD"/>
    <property type="match status" value="1"/>
</dbReference>
<dbReference type="Pfam" id="PF00005">
    <property type="entry name" value="ABC_tran"/>
    <property type="match status" value="1"/>
</dbReference>
<dbReference type="SMART" id="SM00382">
    <property type="entry name" value="AAA"/>
    <property type="match status" value="1"/>
</dbReference>
<dbReference type="SUPFAM" id="SSF52540">
    <property type="entry name" value="P-loop containing nucleoside triphosphate hydrolases"/>
    <property type="match status" value="1"/>
</dbReference>
<dbReference type="PROSITE" id="PS50893">
    <property type="entry name" value="ABC_TRANSPORTER_2"/>
    <property type="match status" value="1"/>
</dbReference>
<dbReference type="PROSITE" id="PS51244">
    <property type="entry name" value="LOLD"/>
    <property type="match status" value="1"/>
</dbReference>
<sequence length="244" mass="26118">MNEIREAVVQTPEQATAVIRAEALAKTYAEGKMRTPVFDGLDLSVATGETVAIVGASGAGKSTLLHLLGGLDIPTAGEVYVAGERMSALSDAQRGKLRNQSLGFVYQFHHLLPEFTALENVMMPVLLSGKNVAVAKGQALQLLESVGLGHRIDHKPSELSGGERQRCAVARALVNKPGCVLGDEPTGNLDDKTAGTVFELMLELNRAQRTSLVLVTHDRGLARRLDRVLELHQGKLRELAPSAV</sequence>
<name>LOLD_XANOR</name>
<keyword id="KW-0067">ATP-binding</keyword>
<keyword id="KW-0997">Cell inner membrane</keyword>
<keyword id="KW-1003">Cell membrane</keyword>
<keyword id="KW-0472">Membrane</keyword>
<keyword id="KW-0547">Nucleotide-binding</keyword>
<keyword id="KW-1185">Reference proteome</keyword>
<keyword id="KW-1278">Translocase</keyword>
<keyword id="KW-0813">Transport</keyword>